<name>Y100_STAAM</name>
<evidence type="ECO:0000255" key="1">
    <source>
        <dbReference type="PROSITE-ProRule" id="PRU00303"/>
    </source>
</evidence>
<evidence type="ECO:0000305" key="2"/>
<gene>
    <name type="ordered locus">SAV0100</name>
</gene>
<reference key="1">
    <citation type="journal article" date="2001" name="Lancet">
        <title>Whole genome sequencing of meticillin-resistant Staphylococcus aureus.</title>
        <authorList>
            <person name="Kuroda M."/>
            <person name="Ohta T."/>
            <person name="Uchiyama I."/>
            <person name="Baba T."/>
            <person name="Yuzawa H."/>
            <person name="Kobayashi I."/>
            <person name="Cui L."/>
            <person name="Oguchi A."/>
            <person name="Aoki K."/>
            <person name="Nagai Y."/>
            <person name="Lian J.-Q."/>
            <person name="Ito T."/>
            <person name="Kanamori M."/>
            <person name="Matsumaru H."/>
            <person name="Maruyama A."/>
            <person name="Murakami H."/>
            <person name="Hosoyama A."/>
            <person name="Mizutani-Ui Y."/>
            <person name="Takahashi N.K."/>
            <person name="Sawano T."/>
            <person name="Inoue R."/>
            <person name="Kaito C."/>
            <person name="Sekimizu K."/>
            <person name="Hirakawa H."/>
            <person name="Kuhara S."/>
            <person name="Goto S."/>
            <person name="Yabuzaki J."/>
            <person name="Kanehisa M."/>
            <person name="Yamashita A."/>
            <person name="Oshima K."/>
            <person name="Furuya K."/>
            <person name="Yoshino C."/>
            <person name="Shiba T."/>
            <person name="Hattori M."/>
            <person name="Ogasawara N."/>
            <person name="Hayashi H."/>
            <person name="Hiramatsu K."/>
        </authorList>
    </citation>
    <scope>NUCLEOTIDE SEQUENCE [LARGE SCALE GENOMIC DNA]</scope>
    <source>
        <strain>Mu50 / ATCC 700699</strain>
    </source>
</reference>
<feature type="signal peptide" evidence="1">
    <location>
        <begin position="1"/>
        <end position="23"/>
    </location>
</feature>
<feature type="chain" id="PRO_0000282117" description="Uncharacterized lipoprotein SAV0100">
    <location>
        <begin position="24"/>
        <end position="255"/>
    </location>
</feature>
<feature type="lipid moiety-binding region" description="N-palmitoyl cysteine" evidence="1">
    <location>
        <position position="24"/>
    </location>
</feature>
<feature type="lipid moiety-binding region" description="S-diacylglycerol cysteine" evidence="1">
    <location>
        <position position="24"/>
    </location>
</feature>
<dbReference type="EMBL" id="BA000017">
    <property type="protein sequence ID" value="BAB56262.1"/>
    <property type="molecule type" value="Genomic_DNA"/>
</dbReference>
<dbReference type="SMR" id="Q99XB2"/>
<dbReference type="DNASU" id="1120059"/>
<dbReference type="KEGG" id="sav:SAV0100"/>
<dbReference type="HOGENOM" id="CLU_071589_0_1_9"/>
<dbReference type="PhylomeDB" id="Q99XB2"/>
<dbReference type="Proteomes" id="UP000002481">
    <property type="component" value="Chromosome"/>
</dbReference>
<dbReference type="GO" id="GO:0005886">
    <property type="term" value="C:plasma membrane"/>
    <property type="evidence" value="ECO:0007669"/>
    <property type="project" value="UniProtKB-SubCell"/>
</dbReference>
<dbReference type="Gene3D" id="2.50.20.40">
    <property type="match status" value="1"/>
</dbReference>
<dbReference type="InterPro" id="IPR007595">
    <property type="entry name" value="Csa"/>
</dbReference>
<dbReference type="InterPro" id="IPR038641">
    <property type="entry name" value="Csa_sf"/>
</dbReference>
<dbReference type="NCBIfam" id="TIGR01742">
    <property type="entry name" value="SA_tandem_lipo"/>
    <property type="match status" value="1"/>
</dbReference>
<dbReference type="Pfam" id="PF04507">
    <property type="entry name" value="DUF576"/>
    <property type="match status" value="1"/>
</dbReference>
<dbReference type="PROSITE" id="PS51257">
    <property type="entry name" value="PROKAR_LIPOPROTEIN"/>
    <property type="match status" value="1"/>
</dbReference>
<keyword id="KW-1003">Cell membrane</keyword>
<keyword id="KW-0449">Lipoprotein</keyword>
<keyword id="KW-0472">Membrane</keyword>
<keyword id="KW-0564">Palmitate</keyword>
<keyword id="KW-0732">Signal</keyword>
<comment type="subcellular location">
    <subcellularLocation>
        <location evidence="1">Cell membrane</location>
        <topology evidence="1">Lipid-anchor</topology>
    </subcellularLocation>
</comment>
<comment type="similarity">
    <text evidence="2">Belongs to the staphylococcal tandem lipoprotein family.</text>
</comment>
<accession>Q99XB2</accession>
<protein>
    <recommendedName>
        <fullName>Uncharacterized lipoprotein SAV0100</fullName>
    </recommendedName>
</protein>
<sequence>MKRLNKLVLYISFLILVISFTAGCGMGKEAEIKKSFEKTLSMYPIKNLEDLYDKEGYRDDQFDKNDKGTWIINSEMVVQPKGERMKSKGMVLYMNRNTKTTTGKYIVSETLHDEDGRPKSKDKEYPVKMVDNKIIPTKGIKDENIKKEIENFKFFAQYGSFKDLSKYKDGDISYNPEVPSYSAKYQLTNDDYNVKQLRKRYKIPTNKAPKLLLKGSGDLKGSSVGYKDIEFTFVEKKGENTFFTDSLHLEPSEDK</sequence>
<organism>
    <name type="scientific">Staphylococcus aureus (strain Mu50 / ATCC 700699)</name>
    <dbReference type="NCBI Taxonomy" id="158878"/>
    <lineage>
        <taxon>Bacteria</taxon>
        <taxon>Bacillati</taxon>
        <taxon>Bacillota</taxon>
        <taxon>Bacilli</taxon>
        <taxon>Bacillales</taxon>
        <taxon>Staphylococcaceae</taxon>
        <taxon>Staphylococcus</taxon>
    </lineage>
</organism>
<proteinExistence type="inferred from homology"/>